<organism>
    <name type="scientific">Saccharomyces cerevisiae (strain ATCC 204508 / S288c)</name>
    <name type="common">Baker's yeast</name>
    <dbReference type="NCBI Taxonomy" id="559292"/>
    <lineage>
        <taxon>Eukaryota</taxon>
        <taxon>Fungi</taxon>
        <taxon>Dikarya</taxon>
        <taxon>Ascomycota</taxon>
        <taxon>Saccharomycotina</taxon>
        <taxon>Saccharomycetes</taxon>
        <taxon>Saccharomycetales</taxon>
        <taxon>Saccharomycetaceae</taxon>
        <taxon>Saccharomyces</taxon>
    </lineage>
</organism>
<evidence type="ECO:0000269" key="1">
    <source>
    </source>
</evidence>
<evidence type="ECO:0000269" key="2">
    <source>
    </source>
</evidence>
<evidence type="ECO:0000269" key="3">
    <source>
    </source>
</evidence>
<evidence type="ECO:0000269" key="4">
    <source>
    </source>
</evidence>
<evidence type="ECO:0000269" key="5">
    <source>
    </source>
</evidence>
<evidence type="ECO:0007829" key="6">
    <source>
        <dbReference type="PDB" id="7BTW"/>
    </source>
</evidence>
<evidence type="ECO:0007829" key="7">
    <source>
        <dbReference type="PDB" id="7BTX"/>
    </source>
</evidence>
<evidence type="ECO:0007829" key="8">
    <source>
        <dbReference type="PDB" id="7BTY"/>
    </source>
</evidence>
<evidence type="ECO:0007829" key="9">
    <source>
        <dbReference type="PDB" id="7E4H"/>
    </source>
</evidence>
<evidence type="ECO:0007829" key="10">
    <source>
        <dbReference type="PDB" id="7E4I"/>
    </source>
</evidence>
<reference key="1">
    <citation type="journal article" date="1994" name="Science">
        <title>Complete nucleotide sequence of Saccharomyces cerevisiae chromosome VIII.</title>
        <authorList>
            <person name="Johnston M."/>
            <person name="Andrews S."/>
            <person name="Brinkman R."/>
            <person name="Cooper J."/>
            <person name="Ding H."/>
            <person name="Dover J."/>
            <person name="Du Z."/>
            <person name="Favello A."/>
            <person name="Fulton L."/>
            <person name="Gattung S."/>
            <person name="Geisel C."/>
            <person name="Kirsten J."/>
            <person name="Kucaba T."/>
            <person name="Hillier L.W."/>
            <person name="Jier M."/>
            <person name="Johnston L."/>
            <person name="Langston Y."/>
            <person name="Latreille P."/>
            <person name="Louis E.J."/>
            <person name="Macri C."/>
            <person name="Mardis E."/>
            <person name="Menezes S."/>
            <person name="Mouser L."/>
            <person name="Nhan M."/>
            <person name="Rifkin L."/>
            <person name="Riles L."/>
            <person name="St Peter H."/>
            <person name="Trevaskis E."/>
            <person name="Vaughan K."/>
            <person name="Vignati D."/>
            <person name="Wilcox L."/>
            <person name="Wohldman P."/>
            <person name="Waterston R."/>
            <person name="Wilson R."/>
            <person name="Vaudin M."/>
        </authorList>
    </citation>
    <scope>NUCLEOTIDE SEQUENCE [LARGE SCALE GENOMIC DNA]</scope>
    <source>
        <strain>ATCC 204508 / S288c</strain>
    </source>
</reference>
<reference key="2">
    <citation type="journal article" date="2014" name="G3 (Bethesda)">
        <title>The reference genome sequence of Saccharomyces cerevisiae: Then and now.</title>
        <authorList>
            <person name="Engel S.R."/>
            <person name="Dietrich F.S."/>
            <person name="Fisk D.G."/>
            <person name="Binkley G."/>
            <person name="Balakrishnan R."/>
            <person name="Costanzo M.C."/>
            <person name="Dwight S.S."/>
            <person name="Hitz B.C."/>
            <person name="Karra K."/>
            <person name="Nash R.S."/>
            <person name="Weng S."/>
            <person name="Wong E.D."/>
            <person name="Lloyd P."/>
            <person name="Skrzypek M.S."/>
            <person name="Miyasato S.R."/>
            <person name="Simison M."/>
            <person name="Cherry J.M."/>
        </authorList>
    </citation>
    <scope>GENOME REANNOTATION</scope>
    <source>
        <strain>ATCC 204508 / S288c</strain>
    </source>
</reference>
<reference key="3">
    <citation type="journal article" date="1989" name="Genes Dev.">
        <title>STE12, a protein involved in cell-type-specific transcription and signal transduction in yeast, is part of protein-DNA complexes.</title>
        <authorList>
            <person name="Errede B."/>
            <person name="Ammerer G."/>
        </authorList>
    </citation>
    <scope>NUCLEOTIDE SEQUENCE [GENOMIC DNA] OF 142-329</scope>
</reference>
<reference key="4">
    <citation type="journal article" date="2003" name="Nature">
        <title>Global analysis of protein expression in yeast.</title>
        <authorList>
            <person name="Ghaemmaghami S."/>
            <person name="Huh W.-K."/>
            <person name="Bower K."/>
            <person name="Howson R.W."/>
            <person name="Belle A."/>
            <person name="Dephoure N."/>
            <person name="O'Shea E.K."/>
            <person name="Weissman J.S."/>
        </authorList>
    </citation>
    <scope>LEVEL OF PROTEIN EXPRESSION [LARGE SCALE ANALYSIS]</scope>
</reference>
<reference key="5">
    <citation type="journal article" date="2004" name="EMBO Rep.">
        <title>Tob38, a novel essential component in the biogenesis of beta-barrel proteins of mitochondria.</title>
        <authorList>
            <person name="Waizenegger T."/>
            <person name="Habib S.J."/>
            <person name="Lech M."/>
            <person name="Mokranjac D."/>
            <person name="Paschen S.A."/>
            <person name="Hell K."/>
            <person name="Neupert W."/>
            <person name="Rapaport D."/>
        </authorList>
    </citation>
    <scope>IDENTIFICATION IN THE SAM COMPLEX</scope>
</reference>
<reference key="6">
    <citation type="journal article" date="2004" name="J. Cell Biol.">
        <title>The Omp85 family of proteins is essential for outer membrane biogenesis in mitochondria and bacteria.</title>
        <authorList>
            <person name="Gentle I."/>
            <person name="Gabriel K."/>
            <person name="Beech P."/>
            <person name="Waller R."/>
            <person name="Lithgow T."/>
        </authorList>
    </citation>
    <scope>FUNCTION</scope>
    <scope>SUBCELLULAR LOCATION</scope>
</reference>
<reference key="7">
    <citation type="journal article" date="2004" name="J. Cell Biol.">
        <title>Two novel proteins in the mitochondrial outer membrane mediate beta-barrel protein assembly.</title>
        <authorList>
            <person name="Ishikawa D."/>
            <person name="Yamamoto H."/>
            <person name="Tamura Y."/>
            <person name="Moritoh K."/>
            <person name="Endo T."/>
        </authorList>
    </citation>
    <scope>IDENTIFICATION IN THE SAM COMPLEX</scope>
    <scope>SUBCELLULAR LOCATION</scope>
</reference>
<reference key="8">
    <citation type="journal article" date="2004" name="J. Biol. Chem.">
        <title>Sam35 of the mitochondrial protein sorting and assembly machinery is a peripheral outer membrane protein essential for cell viability.</title>
        <authorList>
            <person name="Milenkovic D."/>
            <person name="Kozjak V."/>
            <person name="Wiedemann N."/>
            <person name="Lohaus C."/>
            <person name="Meyer H.E."/>
            <person name="Guiard B."/>
            <person name="Pfanner N."/>
            <person name="Meisinger C."/>
        </authorList>
    </citation>
    <scope>FUNCTION</scope>
    <scope>IDENTIFICATION IN THE SAM COMPLEX</scope>
</reference>
<gene>
    <name type="primary">SAM35</name>
    <name type="synonym">OMP85</name>
    <name type="synonym">TOB38</name>
    <name type="synonym">TOM38</name>
    <name type="ordered locus">YHR083W</name>
</gene>
<accession>P14693</accession>
<accession>D3DL34</accession>
<feature type="chain" id="PRO_0000202903" description="Sorting assembly machinery 35 kDa subunit">
    <location>
        <begin position="1"/>
        <end position="329"/>
    </location>
</feature>
<feature type="helix" evidence="10">
    <location>
        <begin position="15"/>
        <end position="17"/>
    </location>
</feature>
<feature type="strand" evidence="7">
    <location>
        <begin position="21"/>
        <end position="23"/>
    </location>
</feature>
<feature type="helix" evidence="7">
    <location>
        <begin position="31"/>
        <end position="40"/>
    </location>
</feature>
<feature type="strand" evidence="9">
    <location>
        <begin position="45"/>
        <end position="50"/>
    </location>
</feature>
<feature type="strand" evidence="6">
    <location>
        <begin position="56"/>
        <end position="58"/>
    </location>
</feature>
<feature type="strand" evidence="7">
    <location>
        <begin position="60"/>
        <end position="65"/>
    </location>
</feature>
<feature type="strand" evidence="7">
    <location>
        <begin position="67"/>
        <end position="69"/>
    </location>
</feature>
<feature type="strand" evidence="7">
    <location>
        <begin position="71"/>
        <end position="73"/>
    </location>
</feature>
<feature type="strand" evidence="7">
    <location>
        <begin position="75"/>
        <end position="80"/>
    </location>
</feature>
<feature type="helix" evidence="7">
    <location>
        <begin position="81"/>
        <end position="94"/>
    </location>
</feature>
<feature type="helix" evidence="9">
    <location>
        <begin position="103"/>
        <end position="105"/>
    </location>
</feature>
<feature type="strand" evidence="7">
    <location>
        <begin position="115"/>
        <end position="117"/>
    </location>
</feature>
<feature type="helix" evidence="7">
    <location>
        <begin position="120"/>
        <end position="122"/>
    </location>
</feature>
<feature type="strand" evidence="7">
    <location>
        <begin position="123"/>
        <end position="125"/>
    </location>
</feature>
<feature type="strand" evidence="7">
    <location>
        <begin position="130"/>
        <end position="133"/>
    </location>
</feature>
<feature type="strand" evidence="7">
    <location>
        <begin position="135"/>
        <end position="137"/>
    </location>
</feature>
<feature type="strand" evidence="7">
    <location>
        <begin position="139"/>
        <end position="141"/>
    </location>
</feature>
<feature type="helix" evidence="7">
    <location>
        <begin position="143"/>
        <end position="152"/>
    </location>
</feature>
<feature type="strand" evidence="6">
    <location>
        <begin position="154"/>
        <end position="156"/>
    </location>
</feature>
<feature type="helix" evidence="7">
    <location>
        <begin position="158"/>
        <end position="180"/>
    </location>
</feature>
<feature type="strand" evidence="8">
    <location>
        <begin position="181"/>
        <end position="183"/>
    </location>
</feature>
<feature type="helix" evidence="7">
    <location>
        <begin position="185"/>
        <end position="191"/>
    </location>
</feature>
<feature type="strand" evidence="8">
    <location>
        <begin position="199"/>
        <end position="201"/>
    </location>
</feature>
<feature type="helix" evidence="7">
    <location>
        <begin position="204"/>
        <end position="215"/>
    </location>
</feature>
<feature type="helix" evidence="7">
    <location>
        <begin position="217"/>
        <end position="224"/>
    </location>
</feature>
<feature type="strand" evidence="7">
    <location>
        <begin position="227"/>
        <end position="229"/>
    </location>
</feature>
<feature type="helix" evidence="7">
    <location>
        <begin position="230"/>
        <end position="233"/>
    </location>
</feature>
<feature type="helix" evidence="7">
    <location>
        <begin position="235"/>
        <end position="241"/>
    </location>
</feature>
<feature type="strand" evidence="7">
    <location>
        <begin position="242"/>
        <end position="245"/>
    </location>
</feature>
<feature type="helix" evidence="7">
    <location>
        <begin position="248"/>
        <end position="271"/>
    </location>
</feature>
<feature type="helix" evidence="7">
    <location>
        <begin position="272"/>
        <end position="274"/>
    </location>
</feature>
<feature type="strand" evidence="7">
    <location>
        <begin position="279"/>
        <end position="281"/>
    </location>
</feature>
<feature type="helix" evidence="7">
    <location>
        <begin position="284"/>
        <end position="296"/>
    </location>
</feature>
<feature type="helix" evidence="7">
    <location>
        <begin position="305"/>
        <end position="311"/>
    </location>
</feature>
<feature type="helix" evidence="7">
    <location>
        <begin position="314"/>
        <end position="324"/>
    </location>
</feature>
<feature type="turn" evidence="9">
    <location>
        <begin position="325"/>
        <end position="327"/>
    </location>
</feature>
<proteinExistence type="evidence at protein level"/>
<sequence length="329" mass="37404">MVSSFSVPMPVKRIFDTFPLQTYAAQTDKDEAVALEIQRRSYTFTERGGGSSELTVEGTYKLGVYNVFLEANTGAALATDPWCLFVQLALCQKNGLVLPTHSQEQTPSHTCNHEMLVLSRLSNPDEALPILVEGYKKRIIRSTVAISEIMRSRILDDAEQLMYYTLLDTVLYDCWITQIIFCASDAQFMELYSCQKLSGSIVTPLDVENSLLQKLSAKSLKISLTKRNKFQFRHREIVKSMQGVYHNHHNSVNQEQVLNVLFENSKQVLLGLKDMLKSDGQPTYLHLKIASYILCITNVKEPIKLKTFVENECKELVQFAQDTLKNFVQ</sequence>
<dbReference type="EMBL" id="U10556">
    <property type="protein sequence ID" value="AAB68885.1"/>
    <property type="molecule type" value="Genomic_DNA"/>
</dbReference>
<dbReference type="EMBL" id="X16112">
    <property type="protein sequence ID" value="CAA34245.1"/>
    <property type="molecule type" value="Genomic_DNA"/>
</dbReference>
<dbReference type="EMBL" id="BK006934">
    <property type="protein sequence ID" value="DAA06778.1"/>
    <property type="molecule type" value="Genomic_DNA"/>
</dbReference>
<dbReference type="PIR" id="S46807">
    <property type="entry name" value="S46807"/>
</dbReference>
<dbReference type="RefSeq" id="NP_011951.1">
    <property type="nucleotide sequence ID" value="NM_001179213.1"/>
</dbReference>
<dbReference type="PDB" id="7BTW">
    <property type="method" value="EM"/>
    <property type="resolution" value="2.90 A"/>
    <property type="chains" value="B=1-329"/>
</dbReference>
<dbReference type="PDB" id="7BTX">
    <property type="method" value="EM"/>
    <property type="resolution" value="2.80 A"/>
    <property type="chains" value="B=1-329"/>
</dbReference>
<dbReference type="PDB" id="7BTY">
    <property type="method" value="EM"/>
    <property type="resolution" value="3.20 A"/>
    <property type="chains" value="B=1-329"/>
</dbReference>
<dbReference type="PDB" id="7E4H">
    <property type="method" value="EM"/>
    <property type="resolution" value="3.01 A"/>
    <property type="chains" value="B=1-329"/>
</dbReference>
<dbReference type="PDB" id="7E4I">
    <property type="method" value="EM"/>
    <property type="resolution" value="3.05 A"/>
    <property type="chains" value="B=1-329"/>
</dbReference>
<dbReference type="PDB" id="7VKU">
    <property type="method" value="EM"/>
    <property type="resolution" value="3.20 A"/>
    <property type="chains" value="B=1-329"/>
</dbReference>
<dbReference type="PDBsum" id="7BTW"/>
<dbReference type="PDBsum" id="7BTX"/>
<dbReference type="PDBsum" id="7BTY"/>
<dbReference type="PDBsum" id="7E4H"/>
<dbReference type="PDBsum" id="7E4I"/>
<dbReference type="PDBsum" id="7VKU"/>
<dbReference type="EMDB" id="EMD-30189"/>
<dbReference type="EMDB" id="EMD-30190"/>
<dbReference type="EMDB" id="EMD-30191"/>
<dbReference type="EMDB" id="EMD-30985"/>
<dbReference type="EMDB" id="EMD-30986"/>
<dbReference type="EMDB" id="EMD-32019"/>
<dbReference type="SMR" id="P14693"/>
<dbReference type="BioGRID" id="36518">
    <property type="interactions" value="108"/>
</dbReference>
<dbReference type="ComplexPortal" id="CPX-1744">
    <property type="entry name" value="Mitochondrial sorting and assembly machinery complex"/>
</dbReference>
<dbReference type="DIP" id="DIP-1879N"/>
<dbReference type="FunCoup" id="P14693">
    <property type="interactions" value="107"/>
</dbReference>
<dbReference type="IntAct" id="P14693">
    <property type="interactions" value="106"/>
</dbReference>
<dbReference type="MINT" id="P14693"/>
<dbReference type="STRING" id="4932.YHR083W"/>
<dbReference type="TCDB" id="1.B.33.3.1">
    <property type="family name" value="the outer membrane protein insertion porin (bam complex) (ompip) family"/>
</dbReference>
<dbReference type="iPTMnet" id="P14693"/>
<dbReference type="PaxDb" id="4932-YHR083W"/>
<dbReference type="PeptideAtlas" id="P14693"/>
<dbReference type="EnsemblFungi" id="YHR083W_mRNA">
    <property type="protein sequence ID" value="YHR083W"/>
    <property type="gene ID" value="YHR083W"/>
</dbReference>
<dbReference type="GeneID" id="856483"/>
<dbReference type="KEGG" id="sce:YHR083W"/>
<dbReference type="AGR" id="SGD:S000001125"/>
<dbReference type="SGD" id="S000001125">
    <property type="gene designation" value="SAM35"/>
</dbReference>
<dbReference type="VEuPathDB" id="FungiDB:YHR083W"/>
<dbReference type="eggNOG" id="ENOG502RXPE">
    <property type="taxonomic scope" value="Eukaryota"/>
</dbReference>
<dbReference type="HOGENOM" id="CLU_073166_0_0_1"/>
<dbReference type="InParanoid" id="P14693"/>
<dbReference type="OMA" id="FVENECK"/>
<dbReference type="OrthoDB" id="198787at2759"/>
<dbReference type="BioCyc" id="YEAST:G3O-31130-MONOMER"/>
<dbReference type="BioGRID-ORCS" id="856483">
    <property type="hits" value="9 hits in 10 CRISPR screens"/>
</dbReference>
<dbReference type="PRO" id="PR:P14693"/>
<dbReference type="Proteomes" id="UP000002311">
    <property type="component" value="Chromosome VIII"/>
</dbReference>
<dbReference type="RNAct" id="P14693">
    <property type="molecule type" value="protein"/>
</dbReference>
<dbReference type="GO" id="GO:0005741">
    <property type="term" value="C:mitochondrial outer membrane"/>
    <property type="evidence" value="ECO:0000314"/>
    <property type="project" value="SGD"/>
</dbReference>
<dbReference type="GO" id="GO:0005739">
    <property type="term" value="C:mitochondrion"/>
    <property type="evidence" value="ECO:0000314"/>
    <property type="project" value="ComplexPortal"/>
</dbReference>
<dbReference type="GO" id="GO:0001401">
    <property type="term" value="C:SAM complex"/>
    <property type="evidence" value="ECO:0000314"/>
    <property type="project" value="SGD"/>
</dbReference>
<dbReference type="GO" id="GO:0070096">
    <property type="term" value="P:mitochondrial outer membrane translocase complex assembly"/>
    <property type="evidence" value="ECO:0000315"/>
    <property type="project" value="SGD"/>
</dbReference>
<dbReference type="GO" id="GO:0030150">
    <property type="term" value="P:protein import into mitochondrial matrix"/>
    <property type="evidence" value="ECO:0000314"/>
    <property type="project" value="ComplexPortal"/>
</dbReference>
<dbReference type="GO" id="GO:0045040">
    <property type="term" value="P:protein insertion into mitochondrial outer membrane"/>
    <property type="evidence" value="ECO:0000315"/>
    <property type="project" value="SGD"/>
</dbReference>
<dbReference type="InterPro" id="IPR021211">
    <property type="entry name" value="SAM35"/>
</dbReference>
<dbReference type="Pfam" id="PF10806">
    <property type="entry name" value="SAM35"/>
    <property type="match status" value="1"/>
</dbReference>
<name>SAM35_YEAST</name>
<comment type="function">
    <text evidence="2 3">Essential component of the mitochondrial outer membrane sorting assembly machinery (SAM or TOB) complex, which is required for the sorting of proteins with complicated topology, such as beta-barrel proteins, to the mitochondrial outer membrane after import by the TOM complex.</text>
</comment>
<comment type="subunit">
    <text evidence="3 4 5">Component of the mitochondrial outer membrane sorting assembly machinery (SAM or TOB) complex, which at least consists of SAM35, SAM37 and SAM50.</text>
</comment>
<comment type="interaction">
    <interactant intactId="EBI-24602">
        <id>P14693</id>
    </interactant>
    <interactant intactId="EBI-10580">
        <id>P18409</id>
        <label>MDM10</label>
    </interactant>
    <organismsDiffer>false</organismsDiffer>
    <experiments>6</experiments>
</comment>
<comment type="interaction">
    <interactant intactId="EBI-24602">
        <id>P14693</id>
    </interactant>
    <interactant intactId="EBI-2347180">
        <id>P50110</id>
        <label>SAM37</label>
    </interactant>
    <organismsDiffer>false</organismsDiffer>
    <experiments>8</experiments>
</comment>
<comment type="interaction">
    <interactant intactId="EBI-24602">
        <id>P14693</id>
    </interactant>
    <interactant intactId="EBI-28646">
        <id>P53969</id>
        <label>SAM50</label>
    </interactant>
    <organismsDiffer>false</organismsDiffer>
    <experiments>9</experiments>
</comment>
<comment type="subcellular location">
    <subcellularLocation>
        <location evidence="2 5">Mitochondrion outer membrane</location>
    </subcellularLocation>
</comment>
<comment type="miscellaneous">
    <text evidence="1">Present with 1470 molecules/cell in log phase SD medium.</text>
</comment>
<protein>
    <recommendedName>
        <fullName>Sorting assembly machinery 35 kDa subunit</fullName>
    </recommendedName>
    <alternativeName>
        <fullName>Mitochondrial 38 kDa outer membrane protein</fullName>
    </alternativeName>
    <alternativeName>
        <fullName>TOB complex 38 kDa subunit</fullName>
    </alternativeName>
</protein>
<keyword id="KW-0002">3D-structure</keyword>
<keyword id="KW-0472">Membrane</keyword>
<keyword id="KW-0496">Mitochondrion</keyword>
<keyword id="KW-1000">Mitochondrion outer membrane</keyword>
<keyword id="KW-0653">Protein transport</keyword>
<keyword id="KW-1185">Reference proteome</keyword>
<keyword id="KW-0813">Transport</keyword>